<gene>
    <name type="primary">ssb</name>
    <name type="ordered locus">aq_064</name>
</gene>
<accession>O66475</accession>
<keyword id="KW-0227">DNA damage</keyword>
<keyword id="KW-0233">DNA recombination</keyword>
<keyword id="KW-0234">DNA repair</keyword>
<keyword id="KW-0235">DNA replication</keyword>
<keyword id="KW-0238">DNA-binding</keyword>
<keyword id="KW-1185">Reference proteome</keyword>
<feature type="chain" id="PRO_0000095999" description="Single-stranded DNA-binding protein">
    <location>
        <begin position="1"/>
        <end position="147"/>
    </location>
</feature>
<feature type="domain" description="SSB" evidence="1">
    <location>
        <begin position="1"/>
        <end position="105"/>
    </location>
</feature>
<feature type="region of interest" description="Disordered" evidence="2">
    <location>
        <begin position="108"/>
        <end position="147"/>
    </location>
</feature>
<feature type="short sequence motif" description="Important for interaction with partner proteins" evidence="1">
    <location>
        <begin position="142"/>
        <end position="147"/>
    </location>
</feature>
<feature type="compositionally biased region" description="Acidic residues" evidence="2">
    <location>
        <begin position="113"/>
        <end position="127"/>
    </location>
</feature>
<feature type="compositionally biased region" description="Basic and acidic residues" evidence="2">
    <location>
        <begin position="128"/>
        <end position="139"/>
    </location>
</feature>
<comment type="function">
    <text evidence="1">Plays an important role in DNA replication, recombination and repair. Binds to ssDNA and to an array of partner proteins to recruit them to their sites of action during DNA metabolism.</text>
</comment>
<comment type="subunit">
    <text evidence="1">Homotetramer.</text>
</comment>
<organism>
    <name type="scientific">Aquifex aeolicus (strain VF5)</name>
    <dbReference type="NCBI Taxonomy" id="224324"/>
    <lineage>
        <taxon>Bacteria</taxon>
        <taxon>Pseudomonadati</taxon>
        <taxon>Aquificota</taxon>
        <taxon>Aquificia</taxon>
        <taxon>Aquificales</taxon>
        <taxon>Aquificaceae</taxon>
        <taxon>Aquifex</taxon>
    </lineage>
</organism>
<name>SSB_AQUAE</name>
<reference key="1">
    <citation type="journal article" date="1998" name="Nature">
        <title>The complete genome of the hyperthermophilic bacterium Aquifex aeolicus.</title>
        <authorList>
            <person name="Deckert G."/>
            <person name="Warren P.V."/>
            <person name="Gaasterland T."/>
            <person name="Young W.G."/>
            <person name="Lenox A.L."/>
            <person name="Graham D.E."/>
            <person name="Overbeek R."/>
            <person name="Snead M.A."/>
            <person name="Keller M."/>
            <person name="Aujay M."/>
            <person name="Huber R."/>
            <person name="Feldman R.A."/>
            <person name="Short J.M."/>
            <person name="Olsen G.J."/>
            <person name="Swanson R.V."/>
        </authorList>
    </citation>
    <scope>NUCLEOTIDE SEQUENCE [LARGE SCALE GENOMIC DNA]</scope>
    <source>
        <strain>VF5</strain>
    </source>
</reference>
<evidence type="ECO:0000255" key="1">
    <source>
        <dbReference type="HAMAP-Rule" id="MF_00984"/>
    </source>
</evidence>
<evidence type="ECO:0000256" key="2">
    <source>
        <dbReference type="SAM" id="MobiDB-lite"/>
    </source>
</evidence>
<proteinExistence type="inferred from homology"/>
<dbReference type="EMBL" id="AE000657">
    <property type="protein sequence ID" value="AAC06439.1"/>
    <property type="molecule type" value="Genomic_DNA"/>
</dbReference>
<dbReference type="PIR" id="H70305">
    <property type="entry name" value="H70305"/>
</dbReference>
<dbReference type="RefSeq" id="NP_213035.1">
    <property type="nucleotide sequence ID" value="NC_000918.1"/>
</dbReference>
<dbReference type="RefSeq" id="WP_010879973.1">
    <property type="nucleotide sequence ID" value="NC_000918.1"/>
</dbReference>
<dbReference type="SMR" id="O66475"/>
<dbReference type="STRING" id="224324.aq_064"/>
<dbReference type="EnsemblBacteria" id="AAC06439">
    <property type="protein sequence ID" value="AAC06439"/>
    <property type="gene ID" value="aq_064"/>
</dbReference>
<dbReference type="KEGG" id="aae:aq_064"/>
<dbReference type="eggNOG" id="COG0629">
    <property type="taxonomic scope" value="Bacteria"/>
</dbReference>
<dbReference type="HOGENOM" id="CLU_078758_6_0_0"/>
<dbReference type="InParanoid" id="O66475"/>
<dbReference type="OrthoDB" id="9809878at2"/>
<dbReference type="Proteomes" id="UP000000798">
    <property type="component" value="Chromosome"/>
</dbReference>
<dbReference type="GO" id="GO:0009295">
    <property type="term" value="C:nucleoid"/>
    <property type="evidence" value="ECO:0000318"/>
    <property type="project" value="GO_Central"/>
</dbReference>
<dbReference type="GO" id="GO:0008047">
    <property type="term" value="F:enzyme activator activity"/>
    <property type="evidence" value="ECO:0000318"/>
    <property type="project" value="GO_Central"/>
</dbReference>
<dbReference type="GO" id="GO:0003697">
    <property type="term" value="F:single-stranded DNA binding"/>
    <property type="evidence" value="ECO:0000318"/>
    <property type="project" value="GO_Central"/>
</dbReference>
<dbReference type="GO" id="GO:0006310">
    <property type="term" value="P:DNA recombination"/>
    <property type="evidence" value="ECO:0007669"/>
    <property type="project" value="UniProtKB-UniRule"/>
</dbReference>
<dbReference type="GO" id="GO:0006281">
    <property type="term" value="P:DNA repair"/>
    <property type="evidence" value="ECO:0007669"/>
    <property type="project" value="UniProtKB-UniRule"/>
</dbReference>
<dbReference type="GO" id="GO:0006260">
    <property type="term" value="P:DNA replication"/>
    <property type="evidence" value="ECO:0000318"/>
    <property type="project" value="GO_Central"/>
</dbReference>
<dbReference type="CDD" id="cd04496">
    <property type="entry name" value="SSB_OBF"/>
    <property type="match status" value="1"/>
</dbReference>
<dbReference type="FunFam" id="2.40.50.140:FF:000551">
    <property type="entry name" value="Single-stranded DNA-binding protein"/>
    <property type="match status" value="1"/>
</dbReference>
<dbReference type="Gene3D" id="2.40.50.140">
    <property type="entry name" value="Nucleic acid-binding proteins"/>
    <property type="match status" value="1"/>
</dbReference>
<dbReference type="HAMAP" id="MF_00984">
    <property type="entry name" value="SSB"/>
    <property type="match status" value="1"/>
</dbReference>
<dbReference type="InterPro" id="IPR012340">
    <property type="entry name" value="NA-bd_OB-fold"/>
</dbReference>
<dbReference type="InterPro" id="IPR000424">
    <property type="entry name" value="Primosome_PriB/ssb"/>
</dbReference>
<dbReference type="InterPro" id="IPR011344">
    <property type="entry name" value="ssDNA-bd"/>
</dbReference>
<dbReference type="NCBIfam" id="TIGR00621">
    <property type="entry name" value="ssb"/>
    <property type="match status" value="1"/>
</dbReference>
<dbReference type="PANTHER" id="PTHR10302">
    <property type="entry name" value="SINGLE-STRANDED DNA-BINDING PROTEIN"/>
    <property type="match status" value="1"/>
</dbReference>
<dbReference type="PANTHER" id="PTHR10302:SF27">
    <property type="entry name" value="SINGLE-STRANDED DNA-BINDING PROTEIN"/>
    <property type="match status" value="1"/>
</dbReference>
<dbReference type="Pfam" id="PF00436">
    <property type="entry name" value="SSB"/>
    <property type="match status" value="1"/>
</dbReference>
<dbReference type="PIRSF" id="PIRSF002070">
    <property type="entry name" value="SSB"/>
    <property type="match status" value="1"/>
</dbReference>
<dbReference type="SUPFAM" id="SSF50249">
    <property type="entry name" value="Nucleic acid-binding proteins"/>
    <property type="match status" value="1"/>
</dbReference>
<dbReference type="PROSITE" id="PS50935">
    <property type="entry name" value="SSB"/>
    <property type="match status" value="1"/>
</dbReference>
<sequence>MLNKVFIIGRLTGDPVITYLPSGTPVVEFTLAYNRRYKNQNGEFQEESHFFDVKAYGKMAEDWATRFSKGYLVLVEGRLSQEKWEKEGKKFSKVRIIAENVRLINRPKGAELQAEEEEEVPPIEEEIEKLGKEEEKPFTDEEDEIPF</sequence>
<protein>
    <recommendedName>
        <fullName evidence="1">Single-stranded DNA-binding protein</fullName>
        <shortName evidence="1">SSB</shortName>
    </recommendedName>
</protein>